<accession>Q2KBQ9</accession>
<proteinExistence type="inferred from homology"/>
<name>EX7S_RHIEC</name>
<feature type="chain" id="PRO_1000019588" description="Exodeoxyribonuclease 7 small subunit">
    <location>
        <begin position="1"/>
        <end position="83"/>
    </location>
</feature>
<comment type="function">
    <text evidence="1">Bidirectionally degrades single-stranded DNA into large acid-insoluble oligonucleotides, which are then degraded further into small acid-soluble oligonucleotides.</text>
</comment>
<comment type="catalytic activity">
    <reaction evidence="1">
        <text>Exonucleolytic cleavage in either 5'- to 3'- or 3'- to 5'-direction to yield nucleoside 5'-phosphates.</text>
        <dbReference type="EC" id="3.1.11.6"/>
    </reaction>
</comment>
<comment type="subunit">
    <text evidence="1">Heterooligomer composed of large and small subunits.</text>
</comment>
<comment type="subcellular location">
    <subcellularLocation>
        <location evidence="1">Cytoplasm</location>
    </subcellularLocation>
</comment>
<comment type="similarity">
    <text evidence="1">Belongs to the XseB family.</text>
</comment>
<keyword id="KW-0963">Cytoplasm</keyword>
<keyword id="KW-0269">Exonuclease</keyword>
<keyword id="KW-0378">Hydrolase</keyword>
<keyword id="KW-0540">Nuclease</keyword>
<keyword id="KW-1185">Reference proteome</keyword>
<gene>
    <name evidence="1" type="primary">xseB</name>
    <name type="ordered locus">RHE_CH00916</name>
</gene>
<evidence type="ECO:0000255" key="1">
    <source>
        <dbReference type="HAMAP-Rule" id="MF_00337"/>
    </source>
</evidence>
<dbReference type="EC" id="3.1.11.6" evidence="1"/>
<dbReference type="EMBL" id="CP000133">
    <property type="protein sequence ID" value="ABC89727.1"/>
    <property type="molecule type" value="Genomic_DNA"/>
</dbReference>
<dbReference type="RefSeq" id="WP_011424263.1">
    <property type="nucleotide sequence ID" value="NC_007761.1"/>
</dbReference>
<dbReference type="SMR" id="Q2KBQ9"/>
<dbReference type="KEGG" id="ret:RHE_CH00916"/>
<dbReference type="eggNOG" id="COG1722">
    <property type="taxonomic scope" value="Bacteria"/>
</dbReference>
<dbReference type="HOGENOM" id="CLU_145918_0_3_5"/>
<dbReference type="OrthoDB" id="9808145at2"/>
<dbReference type="Proteomes" id="UP000001936">
    <property type="component" value="Chromosome"/>
</dbReference>
<dbReference type="GO" id="GO:0005829">
    <property type="term" value="C:cytosol"/>
    <property type="evidence" value="ECO:0007669"/>
    <property type="project" value="TreeGrafter"/>
</dbReference>
<dbReference type="GO" id="GO:0009318">
    <property type="term" value="C:exodeoxyribonuclease VII complex"/>
    <property type="evidence" value="ECO:0007669"/>
    <property type="project" value="InterPro"/>
</dbReference>
<dbReference type="GO" id="GO:0008855">
    <property type="term" value="F:exodeoxyribonuclease VII activity"/>
    <property type="evidence" value="ECO:0007669"/>
    <property type="project" value="UniProtKB-UniRule"/>
</dbReference>
<dbReference type="GO" id="GO:0006308">
    <property type="term" value="P:DNA catabolic process"/>
    <property type="evidence" value="ECO:0007669"/>
    <property type="project" value="UniProtKB-UniRule"/>
</dbReference>
<dbReference type="Gene3D" id="1.10.287.1040">
    <property type="entry name" value="Exonuclease VII, small subunit"/>
    <property type="match status" value="1"/>
</dbReference>
<dbReference type="HAMAP" id="MF_00337">
    <property type="entry name" value="Exonuc_7_S"/>
    <property type="match status" value="1"/>
</dbReference>
<dbReference type="InterPro" id="IPR003761">
    <property type="entry name" value="Exonuc_VII_S"/>
</dbReference>
<dbReference type="InterPro" id="IPR037004">
    <property type="entry name" value="Exonuc_VII_ssu_sf"/>
</dbReference>
<dbReference type="NCBIfam" id="NF002139">
    <property type="entry name" value="PRK00977.1-3"/>
    <property type="match status" value="1"/>
</dbReference>
<dbReference type="NCBIfam" id="TIGR01280">
    <property type="entry name" value="xseB"/>
    <property type="match status" value="1"/>
</dbReference>
<dbReference type="PANTHER" id="PTHR34137">
    <property type="entry name" value="EXODEOXYRIBONUCLEASE 7 SMALL SUBUNIT"/>
    <property type="match status" value="1"/>
</dbReference>
<dbReference type="PANTHER" id="PTHR34137:SF1">
    <property type="entry name" value="EXODEOXYRIBONUCLEASE 7 SMALL SUBUNIT"/>
    <property type="match status" value="1"/>
</dbReference>
<dbReference type="Pfam" id="PF02609">
    <property type="entry name" value="Exonuc_VII_S"/>
    <property type="match status" value="1"/>
</dbReference>
<dbReference type="SUPFAM" id="SSF116842">
    <property type="entry name" value="XseB-like"/>
    <property type="match status" value="1"/>
</dbReference>
<protein>
    <recommendedName>
        <fullName evidence="1">Exodeoxyribonuclease 7 small subunit</fullName>
        <ecNumber evidence="1">3.1.11.6</ecNumber>
    </recommendedName>
    <alternativeName>
        <fullName evidence="1">Exodeoxyribonuclease VII small subunit</fullName>
        <shortName evidence="1">Exonuclease VII small subunit</shortName>
    </alternativeName>
</protein>
<organism>
    <name type="scientific">Rhizobium etli (strain ATCC 51251 / DSM 11541 / JCM 21823 / NBRC 15573 / CFN 42)</name>
    <dbReference type="NCBI Taxonomy" id="347834"/>
    <lineage>
        <taxon>Bacteria</taxon>
        <taxon>Pseudomonadati</taxon>
        <taxon>Pseudomonadota</taxon>
        <taxon>Alphaproteobacteria</taxon>
        <taxon>Hyphomicrobiales</taxon>
        <taxon>Rhizobiaceae</taxon>
        <taxon>Rhizobium/Agrobacterium group</taxon>
        <taxon>Rhizobium</taxon>
    </lineage>
</organism>
<sequence length="83" mass="9079">MTDSAKPEVSGLSFEKAVAELESIVARLERGDVALDESIEIYERGEALKKHCETLLSAAENRIEKIRLDRAGKPRGVEPLDGA</sequence>
<reference key="1">
    <citation type="journal article" date="2006" name="Proc. Natl. Acad. Sci. U.S.A.">
        <title>The partitioned Rhizobium etli genome: genetic and metabolic redundancy in seven interacting replicons.</title>
        <authorList>
            <person name="Gonzalez V."/>
            <person name="Santamaria R.I."/>
            <person name="Bustos P."/>
            <person name="Hernandez-Gonzalez I."/>
            <person name="Medrano-Soto A."/>
            <person name="Moreno-Hagelsieb G."/>
            <person name="Janga S.C."/>
            <person name="Ramirez M.A."/>
            <person name="Jimenez-Jacinto V."/>
            <person name="Collado-Vides J."/>
            <person name="Davila G."/>
        </authorList>
    </citation>
    <scope>NUCLEOTIDE SEQUENCE [LARGE SCALE GENOMIC DNA]</scope>
    <source>
        <strain>ATCC 51251 / DSM 11541 / JCM 21823 / NBRC 15573 / CFN 42</strain>
    </source>
</reference>